<keyword id="KW-0150">Chloroplast</keyword>
<keyword id="KW-0934">Plastid</keyword>
<keyword id="KW-1185">Reference proteome</keyword>
<keyword id="KW-0687">Ribonucleoprotein</keyword>
<keyword id="KW-0689">Ribosomal protein</keyword>
<keyword id="KW-0694">RNA-binding</keyword>
<keyword id="KW-0699">rRNA-binding</keyword>
<evidence type="ECO:0000255" key="1">
    <source>
        <dbReference type="HAMAP-Rule" id="MF_00537"/>
    </source>
</evidence>
<evidence type="ECO:0000305" key="2"/>
<gene>
    <name evidence="1" type="primary">rps14</name>
</gene>
<accession>A0T0B3</accession>
<protein>
    <recommendedName>
        <fullName evidence="1">Small ribosomal subunit protein uS14c</fullName>
    </recommendedName>
    <alternativeName>
        <fullName evidence="2">30S ribosomal protein S14, chloroplastic</fullName>
    </alternativeName>
</protein>
<comment type="function">
    <text evidence="1">Binds 16S rRNA, required for the assembly of 30S particles.</text>
</comment>
<comment type="subunit">
    <text evidence="1">Part of the 30S ribosomal subunit.</text>
</comment>
<comment type="subcellular location">
    <subcellularLocation>
        <location>Plastid</location>
        <location>Chloroplast</location>
    </subcellularLocation>
</comment>
<comment type="similarity">
    <text evidence="1">Belongs to the universal ribosomal protein uS14 family.</text>
</comment>
<reference key="1">
    <citation type="journal article" date="2007" name="Mol. Genet. Genomics">
        <title>Chloroplast genomes of the diatoms Phaeodactylum tricornutum and Thalassiosira pseudonana: comparison with other plastid genomes of the red lineage.</title>
        <authorList>
            <person name="Oudot-Le Secq M.-P."/>
            <person name="Grimwood J."/>
            <person name="Shapiro H."/>
            <person name="Armbrust E.V."/>
            <person name="Bowler C."/>
            <person name="Green B.R."/>
        </authorList>
    </citation>
    <scope>NUCLEOTIDE SEQUENCE [LARGE SCALE GENOMIC DNA]</scope>
    <source>
        <strain>CCAP 1055/1</strain>
    </source>
</reference>
<dbReference type="EMBL" id="EF067920">
    <property type="protein sequence ID" value="ABK20611.1"/>
    <property type="molecule type" value="Genomic_DNA"/>
</dbReference>
<dbReference type="RefSeq" id="YP_874388.1">
    <property type="nucleotide sequence ID" value="NC_008588.1"/>
</dbReference>
<dbReference type="SMR" id="A0T0B3"/>
<dbReference type="FunCoup" id="A0T0B3">
    <property type="interactions" value="157"/>
</dbReference>
<dbReference type="STRING" id="556484.A0T0B3"/>
<dbReference type="GeneID" id="4524673"/>
<dbReference type="InParanoid" id="A0T0B3"/>
<dbReference type="Proteomes" id="UP000000759">
    <property type="component" value="Chloroplast"/>
</dbReference>
<dbReference type="GO" id="GO:0009507">
    <property type="term" value="C:chloroplast"/>
    <property type="evidence" value="ECO:0007669"/>
    <property type="project" value="UniProtKB-SubCell"/>
</dbReference>
<dbReference type="GO" id="GO:0015935">
    <property type="term" value="C:small ribosomal subunit"/>
    <property type="evidence" value="ECO:0007669"/>
    <property type="project" value="TreeGrafter"/>
</dbReference>
<dbReference type="GO" id="GO:0019843">
    <property type="term" value="F:rRNA binding"/>
    <property type="evidence" value="ECO:0007669"/>
    <property type="project" value="UniProtKB-UniRule"/>
</dbReference>
<dbReference type="GO" id="GO:0003735">
    <property type="term" value="F:structural constituent of ribosome"/>
    <property type="evidence" value="ECO:0007669"/>
    <property type="project" value="InterPro"/>
</dbReference>
<dbReference type="GO" id="GO:0006412">
    <property type="term" value="P:translation"/>
    <property type="evidence" value="ECO:0007669"/>
    <property type="project" value="UniProtKB-UniRule"/>
</dbReference>
<dbReference type="FunFam" id="1.10.287.1480:FF:000001">
    <property type="entry name" value="30S ribosomal protein S14"/>
    <property type="match status" value="1"/>
</dbReference>
<dbReference type="Gene3D" id="1.10.287.1480">
    <property type="match status" value="1"/>
</dbReference>
<dbReference type="HAMAP" id="MF_00537">
    <property type="entry name" value="Ribosomal_uS14_1"/>
    <property type="match status" value="1"/>
</dbReference>
<dbReference type="InterPro" id="IPR001209">
    <property type="entry name" value="Ribosomal_uS14"/>
</dbReference>
<dbReference type="InterPro" id="IPR023036">
    <property type="entry name" value="Ribosomal_uS14_bac/plastid"/>
</dbReference>
<dbReference type="InterPro" id="IPR018271">
    <property type="entry name" value="Ribosomal_uS14_CS"/>
</dbReference>
<dbReference type="NCBIfam" id="NF006477">
    <property type="entry name" value="PRK08881.1"/>
    <property type="match status" value="1"/>
</dbReference>
<dbReference type="PANTHER" id="PTHR19836">
    <property type="entry name" value="30S RIBOSOMAL PROTEIN S14"/>
    <property type="match status" value="1"/>
</dbReference>
<dbReference type="PANTHER" id="PTHR19836:SF19">
    <property type="entry name" value="SMALL RIBOSOMAL SUBUNIT PROTEIN US14M"/>
    <property type="match status" value="1"/>
</dbReference>
<dbReference type="Pfam" id="PF00253">
    <property type="entry name" value="Ribosomal_S14"/>
    <property type="match status" value="1"/>
</dbReference>
<dbReference type="SUPFAM" id="SSF57716">
    <property type="entry name" value="Glucocorticoid receptor-like (DNA-binding domain)"/>
    <property type="match status" value="1"/>
</dbReference>
<dbReference type="PROSITE" id="PS00527">
    <property type="entry name" value="RIBOSOMAL_S14"/>
    <property type="match status" value="1"/>
</dbReference>
<name>RR14_PHATC</name>
<feature type="chain" id="PRO_0000276714" description="Small ribosomal subunit protein uS14c">
    <location>
        <begin position="1"/>
        <end position="100"/>
    </location>
</feature>
<sequence>MAKKSMIEREKKRIKLTKKYALKRATLLKKYQTEESFNLKLELHSKIQKLPRNSAKTRIRNRCWKTGRPRGVFRDFGLSRHVFREMAHQCLLPGVTKSSW</sequence>
<organism>
    <name type="scientific">Phaeodactylum tricornutum (strain CCAP 1055/1)</name>
    <dbReference type="NCBI Taxonomy" id="556484"/>
    <lineage>
        <taxon>Eukaryota</taxon>
        <taxon>Sar</taxon>
        <taxon>Stramenopiles</taxon>
        <taxon>Ochrophyta</taxon>
        <taxon>Bacillariophyta</taxon>
        <taxon>Bacillariophyceae</taxon>
        <taxon>Bacillariophycidae</taxon>
        <taxon>Naviculales</taxon>
        <taxon>Phaeodactylaceae</taxon>
        <taxon>Phaeodactylum</taxon>
    </lineage>
</organism>
<geneLocation type="chloroplast"/>
<proteinExistence type="inferred from homology"/>